<keyword id="KW-0963">Cytoplasm</keyword>
<keyword id="KW-1185">Reference proteome</keyword>
<keyword id="KW-0694">RNA-binding</keyword>
<feature type="chain" id="PRO_1000001991" description="SsrA-binding protein">
    <location>
        <begin position="1"/>
        <end position="159"/>
    </location>
</feature>
<organism>
    <name type="scientific">Actinobacillus pleuropneumoniae serotype 5b (strain L20)</name>
    <dbReference type="NCBI Taxonomy" id="416269"/>
    <lineage>
        <taxon>Bacteria</taxon>
        <taxon>Pseudomonadati</taxon>
        <taxon>Pseudomonadota</taxon>
        <taxon>Gammaproteobacteria</taxon>
        <taxon>Pasteurellales</taxon>
        <taxon>Pasteurellaceae</taxon>
        <taxon>Actinobacillus</taxon>
    </lineage>
</organism>
<proteinExistence type="inferred from homology"/>
<sequence length="159" mass="18056">MAKKPKVASNTIALNKRARHEYFIEEEIEAGLELQGWEVKSLRAGKANIGDSYVTFRNGEAFLFGATITPLNMASTHIVCDPTRTRKLLLNKRELDSLFGKVNRDGMTVVALSLYWKNAWAKVKVGVAKGKKLHDKREDIKDREWQVAKQRIMKNANRG</sequence>
<gene>
    <name evidence="1" type="primary">smpB</name>
    <name type="ordered locus">APL_0867</name>
</gene>
<protein>
    <recommendedName>
        <fullName evidence="1">SsrA-binding protein</fullName>
    </recommendedName>
    <alternativeName>
        <fullName evidence="1">Small protein B</fullName>
    </alternativeName>
</protein>
<dbReference type="EMBL" id="CP000569">
    <property type="protein sequence ID" value="ABN73963.1"/>
    <property type="molecule type" value="Genomic_DNA"/>
</dbReference>
<dbReference type="RefSeq" id="WP_005601189.1">
    <property type="nucleotide sequence ID" value="NC_009053.1"/>
</dbReference>
<dbReference type="SMR" id="A3N0M7"/>
<dbReference type="STRING" id="416269.APL_0867"/>
<dbReference type="EnsemblBacteria" id="ABN73963">
    <property type="protein sequence ID" value="ABN73963"/>
    <property type="gene ID" value="APL_0867"/>
</dbReference>
<dbReference type="GeneID" id="92742917"/>
<dbReference type="KEGG" id="apl:APL_0867"/>
<dbReference type="eggNOG" id="COG0691">
    <property type="taxonomic scope" value="Bacteria"/>
</dbReference>
<dbReference type="HOGENOM" id="CLU_108953_3_0_6"/>
<dbReference type="Proteomes" id="UP000001432">
    <property type="component" value="Chromosome"/>
</dbReference>
<dbReference type="GO" id="GO:0005829">
    <property type="term" value="C:cytosol"/>
    <property type="evidence" value="ECO:0007669"/>
    <property type="project" value="TreeGrafter"/>
</dbReference>
<dbReference type="GO" id="GO:0003723">
    <property type="term" value="F:RNA binding"/>
    <property type="evidence" value="ECO:0007669"/>
    <property type="project" value="UniProtKB-UniRule"/>
</dbReference>
<dbReference type="GO" id="GO:0070929">
    <property type="term" value="P:trans-translation"/>
    <property type="evidence" value="ECO:0007669"/>
    <property type="project" value="UniProtKB-UniRule"/>
</dbReference>
<dbReference type="CDD" id="cd09294">
    <property type="entry name" value="SmpB"/>
    <property type="match status" value="1"/>
</dbReference>
<dbReference type="Gene3D" id="2.40.280.10">
    <property type="match status" value="1"/>
</dbReference>
<dbReference type="HAMAP" id="MF_00023">
    <property type="entry name" value="SmpB"/>
    <property type="match status" value="1"/>
</dbReference>
<dbReference type="InterPro" id="IPR023620">
    <property type="entry name" value="SmpB"/>
</dbReference>
<dbReference type="InterPro" id="IPR000037">
    <property type="entry name" value="SsrA-bd_prot"/>
</dbReference>
<dbReference type="InterPro" id="IPR020081">
    <property type="entry name" value="SsrA-bd_prot_CS"/>
</dbReference>
<dbReference type="NCBIfam" id="NF003843">
    <property type="entry name" value="PRK05422.1"/>
    <property type="match status" value="1"/>
</dbReference>
<dbReference type="NCBIfam" id="TIGR00086">
    <property type="entry name" value="smpB"/>
    <property type="match status" value="1"/>
</dbReference>
<dbReference type="PANTHER" id="PTHR30308:SF2">
    <property type="entry name" value="SSRA-BINDING PROTEIN"/>
    <property type="match status" value="1"/>
</dbReference>
<dbReference type="PANTHER" id="PTHR30308">
    <property type="entry name" value="TMRNA-BINDING COMPONENT OF TRANS-TRANSLATION TAGGING COMPLEX"/>
    <property type="match status" value="1"/>
</dbReference>
<dbReference type="Pfam" id="PF01668">
    <property type="entry name" value="SmpB"/>
    <property type="match status" value="1"/>
</dbReference>
<dbReference type="SUPFAM" id="SSF74982">
    <property type="entry name" value="Small protein B (SmpB)"/>
    <property type="match status" value="1"/>
</dbReference>
<dbReference type="PROSITE" id="PS01317">
    <property type="entry name" value="SSRP"/>
    <property type="match status" value="1"/>
</dbReference>
<name>SSRP_ACTP2</name>
<comment type="function">
    <text evidence="1">Required for rescue of stalled ribosomes mediated by trans-translation. Binds to transfer-messenger RNA (tmRNA), required for stable association of tmRNA with ribosomes. tmRNA and SmpB together mimic tRNA shape, replacing the anticodon stem-loop with SmpB. tmRNA is encoded by the ssrA gene; the 2 termini fold to resemble tRNA(Ala) and it encodes a 'tag peptide', a short internal open reading frame. During trans-translation Ala-aminoacylated tmRNA acts like a tRNA, entering the A-site of stalled ribosomes, displacing the stalled mRNA. The ribosome then switches to translate the ORF on the tmRNA; the nascent peptide is terminated with the 'tag peptide' encoded by the tmRNA and targeted for degradation. The ribosome is freed to recommence translation, which seems to be the essential function of trans-translation.</text>
</comment>
<comment type="subcellular location">
    <subcellularLocation>
        <location evidence="1">Cytoplasm</location>
    </subcellularLocation>
    <text evidence="1">The tmRNA-SmpB complex associates with stalled 70S ribosomes.</text>
</comment>
<comment type="similarity">
    <text evidence="1">Belongs to the SmpB family.</text>
</comment>
<reference key="1">
    <citation type="journal article" date="2008" name="J. Bacteriol.">
        <title>The complete genome sequence of Actinobacillus pleuropneumoniae L20 (serotype 5b).</title>
        <authorList>
            <person name="Foote S.J."/>
            <person name="Bosse J.T."/>
            <person name="Bouevitch A.B."/>
            <person name="Langford P.R."/>
            <person name="Young N.M."/>
            <person name="Nash J.H.E."/>
        </authorList>
    </citation>
    <scope>NUCLEOTIDE SEQUENCE [LARGE SCALE GENOMIC DNA]</scope>
    <source>
        <strain>L20</strain>
    </source>
</reference>
<evidence type="ECO:0000255" key="1">
    <source>
        <dbReference type="HAMAP-Rule" id="MF_00023"/>
    </source>
</evidence>
<accession>A3N0M7</accession>